<protein>
    <recommendedName>
        <fullName evidence="1">Holliday junction branch migration complex subunit RuvA</fullName>
    </recommendedName>
</protein>
<evidence type="ECO:0000255" key="1">
    <source>
        <dbReference type="HAMAP-Rule" id="MF_00031"/>
    </source>
</evidence>
<sequence>MIGRLQGKLIEKQPPEILLDVQGIGYELLLPMTSFYNLPDTGQECTVFTHLVVREDAHLLFGFSTKTDRTLFRELIKTNGVGPKLALAILSAMSVHEFAYAIEREELSKLVKIPGVGKKTAERLLVELKGKFKGLRQPDFFVESKHITVPDIVSAEKETPNDEAVAALVALGYKPPEAAKMVKKVANGDLTSEQLIREALKAAL</sequence>
<reference key="1">
    <citation type="journal article" date="2010" name="BMC Genomics">
        <title>A genomic perspective on the potential of Actinobacillus succinogenes for industrial succinate production.</title>
        <authorList>
            <person name="McKinlay J.B."/>
            <person name="Laivenieks M."/>
            <person name="Schindler B.D."/>
            <person name="McKinlay A.A."/>
            <person name="Siddaramappa S."/>
            <person name="Challacombe J.F."/>
            <person name="Lowry S.R."/>
            <person name="Clum A."/>
            <person name="Lapidus A.L."/>
            <person name="Burkhart K.B."/>
            <person name="Harkins V."/>
            <person name="Vieille C."/>
        </authorList>
    </citation>
    <scope>NUCLEOTIDE SEQUENCE [LARGE SCALE GENOMIC DNA]</scope>
    <source>
        <strain>ATCC 55618 / DSM 22257 / CCUG 43843 / 130Z</strain>
    </source>
</reference>
<comment type="function">
    <text evidence="1">The RuvA-RuvB-RuvC complex processes Holliday junction (HJ) DNA during genetic recombination and DNA repair, while the RuvA-RuvB complex plays an important role in the rescue of blocked DNA replication forks via replication fork reversal (RFR). RuvA specifically binds to HJ cruciform DNA, conferring on it an open structure. The RuvB hexamer acts as an ATP-dependent pump, pulling dsDNA into and through the RuvAB complex. HJ branch migration allows RuvC to scan DNA until it finds its consensus sequence, where it cleaves and resolves the cruciform DNA.</text>
</comment>
<comment type="subunit">
    <text evidence="1">Homotetramer. Forms an RuvA(8)-RuvB(12)-Holliday junction (HJ) complex. HJ DNA is sandwiched between 2 RuvA tetramers; dsDNA enters through RuvA and exits via RuvB. An RuvB hexamer assembles on each DNA strand where it exits the tetramer. Each RuvB hexamer is contacted by two RuvA subunits (via domain III) on 2 adjacent RuvB subunits; this complex drives branch migration. In the full resolvosome a probable DNA-RuvA(4)-RuvB(12)-RuvC(2) complex forms which resolves the HJ.</text>
</comment>
<comment type="subcellular location">
    <subcellularLocation>
        <location evidence="1">Cytoplasm</location>
    </subcellularLocation>
</comment>
<comment type="domain">
    <text evidence="1">Has three domains with a flexible linker between the domains II and III and assumes an 'L' shape. Domain III is highly mobile and contacts RuvB.</text>
</comment>
<comment type="similarity">
    <text evidence="1">Belongs to the RuvA family.</text>
</comment>
<keyword id="KW-0963">Cytoplasm</keyword>
<keyword id="KW-0227">DNA damage</keyword>
<keyword id="KW-0233">DNA recombination</keyword>
<keyword id="KW-0234">DNA repair</keyword>
<keyword id="KW-0238">DNA-binding</keyword>
<keyword id="KW-1185">Reference proteome</keyword>
<organism>
    <name type="scientific">Actinobacillus succinogenes (strain ATCC 55618 / DSM 22257 / CCUG 43843 / 130Z)</name>
    <dbReference type="NCBI Taxonomy" id="339671"/>
    <lineage>
        <taxon>Bacteria</taxon>
        <taxon>Pseudomonadati</taxon>
        <taxon>Pseudomonadota</taxon>
        <taxon>Gammaproteobacteria</taxon>
        <taxon>Pasteurellales</taxon>
        <taxon>Pasteurellaceae</taxon>
        <taxon>Actinobacillus</taxon>
    </lineage>
</organism>
<proteinExistence type="inferred from homology"/>
<accession>A6VQA4</accession>
<name>RUVA_ACTSZ</name>
<gene>
    <name evidence="1" type="primary">ruvA</name>
    <name type="ordered locus">Asuc_1800</name>
</gene>
<feature type="chain" id="PRO_1000071013" description="Holliday junction branch migration complex subunit RuvA">
    <location>
        <begin position="1"/>
        <end position="204"/>
    </location>
</feature>
<feature type="region of interest" description="Domain I" evidence="1">
    <location>
        <begin position="1"/>
        <end position="64"/>
    </location>
</feature>
<feature type="region of interest" description="Domain II" evidence="1">
    <location>
        <begin position="65"/>
        <end position="143"/>
    </location>
</feature>
<feature type="region of interest" description="Flexible linker" evidence="1">
    <location>
        <begin position="144"/>
        <end position="155"/>
    </location>
</feature>
<feature type="region of interest" description="Domain III" evidence="1">
    <location>
        <begin position="156"/>
        <end position="204"/>
    </location>
</feature>
<dbReference type="EMBL" id="CP000746">
    <property type="protein sequence ID" value="ABR75151.1"/>
    <property type="molecule type" value="Genomic_DNA"/>
</dbReference>
<dbReference type="RefSeq" id="WP_012073528.1">
    <property type="nucleotide sequence ID" value="NC_009655.1"/>
</dbReference>
<dbReference type="SMR" id="A6VQA4"/>
<dbReference type="STRING" id="339671.Asuc_1800"/>
<dbReference type="KEGG" id="asu:Asuc_1800"/>
<dbReference type="eggNOG" id="COG0632">
    <property type="taxonomic scope" value="Bacteria"/>
</dbReference>
<dbReference type="HOGENOM" id="CLU_087936_0_0_6"/>
<dbReference type="OrthoDB" id="5293449at2"/>
<dbReference type="Proteomes" id="UP000001114">
    <property type="component" value="Chromosome"/>
</dbReference>
<dbReference type="GO" id="GO:0005737">
    <property type="term" value="C:cytoplasm"/>
    <property type="evidence" value="ECO:0007669"/>
    <property type="project" value="UniProtKB-SubCell"/>
</dbReference>
<dbReference type="GO" id="GO:0009379">
    <property type="term" value="C:Holliday junction helicase complex"/>
    <property type="evidence" value="ECO:0007669"/>
    <property type="project" value="InterPro"/>
</dbReference>
<dbReference type="GO" id="GO:0048476">
    <property type="term" value="C:Holliday junction resolvase complex"/>
    <property type="evidence" value="ECO:0007669"/>
    <property type="project" value="UniProtKB-UniRule"/>
</dbReference>
<dbReference type="GO" id="GO:0005524">
    <property type="term" value="F:ATP binding"/>
    <property type="evidence" value="ECO:0007669"/>
    <property type="project" value="InterPro"/>
</dbReference>
<dbReference type="GO" id="GO:0000400">
    <property type="term" value="F:four-way junction DNA binding"/>
    <property type="evidence" value="ECO:0007669"/>
    <property type="project" value="UniProtKB-UniRule"/>
</dbReference>
<dbReference type="GO" id="GO:0009378">
    <property type="term" value="F:four-way junction helicase activity"/>
    <property type="evidence" value="ECO:0007669"/>
    <property type="project" value="InterPro"/>
</dbReference>
<dbReference type="GO" id="GO:0006310">
    <property type="term" value="P:DNA recombination"/>
    <property type="evidence" value="ECO:0007669"/>
    <property type="project" value="UniProtKB-UniRule"/>
</dbReference>
<dbReference type="GO" id="GO:0006281">
    <property type="term" value="P:DNA repair"/>
    <property type="evidence" value="ECO:0007669"/>
    <property type="project" value="UniProtKB-UniRule"/>
</dbReference>
<dbReference type="CDD" id="cd14332">
    <property type="entry name" value="UBA_RuvA_C"/>
    <property type="match status" value="1"/>
</dbReference>
<dbReference type="FunFam" id="2.40.50.140:FF:000083">
    <property type="entry name" value="Holliday junction ATP-dependent DNA helicase RuvA"/>
    <property type="match status" value="1"/>
</dbReference>
<dbReference type="Gene3D" id="1.10.150.20">
    <property type="entry name" value="5' to 3' exonuclease, C-terminal subdomain"/>
    <property type="match status" value="1"/>
</dbReference>
<dbReference type="Gene3D" id="1.10.8.10">
    <property type="entry name" value="DNA helicase RuvA subunit, C-terminal domain"/>
    <property type="match status" value="1"/>
</dbReference>
<dbReference type="Gene3D" id="2.40.50.140">
    <property type="entry name" value="Nucleic acid-binding proteins"/>
    <property type="match status" value="1"/>
</dbReference>
<dbReference type="HAMAP" id="MF_00031">
    <property type="entry name" value="DNA_HJ_migration_RuvA"/>
    <property type="match status" value="1"/>
</dbReference>
<dbReference type="InterPro" id="IPR013849">
    <property type="entry name" value="DNA_helicase_Holl-junc_RuvA_I"/>
</dbReference>
<dbReference type="InterPro" id="IPR003583">
    <property type="entry name" value="Hlx-hairpin-Hlx_DNA-bd_motif"/>
</dbReference>
<dbReference type="InterPro" id="IPR012340">
    <property type="entry name" value="NA-bd_OB-fold"/>
</dbReference>
<dbReference type="InterPro" id="IPR000085">
    <property type="entry name" value="RuvA"/>
</dbReference>
<dbReference type="InterPro" id="IPR010994">
    <property type="entry name" value="RuvA_2-like"/>
</dbReference>
<dbReference type="InterPro" id="IPR011114">
    <property type="entry name" value="RuvA_C"/>
</dbReference>
<dbReference type="InterPro" id="IPR036267">
    <property type="entry name" value="RuvA_C_sf"/>
</dbReference>
<dbReference type="NCBIfam" id="TIGR00084">
    <property type="entry name" value="ruvA"/>
    <property type="match status" value="1"/>
</dbReference>
<dbReference type="Pfam" id="PF14520">
    <property type="entry name" value="HHH_5"/>
    <property type="match status" value="1"/>
</dbReference>
<dbReference type="Pfam" id="PF07499">
    <property type="entry name" value="RuvA_C"/>
    <property type="match status" value="1"/>
</dbReference>
<dbReference type="Pfam" id="PF01330">
    <property type="entry name" value="RuvA_N"/>
    <property type="match status" value="1"/>
</dbReference>
<dbReference type="SMART" id="SM00278">
    <property type="entry name" value="HhH1"/>
    <property type="match status" value="2"/>
</dbReference>
<dbReference type="SUPFAM" id="SSF46929">
    <property type="entry name" value="DNA helicase RuvA subunit, C-terminal domain"/>
    <property type="match status" value="1"/>
</dbReference>
<dbReference type="SUPFAM" id="SSF50249">
    <property type="entry name" value="Nucleic acid-binding proteins"/>
    <property type="match status" value="1"/>
</dbReference>
<dbReference type="SUPFAM" id="SSF47781">
    <property type="entry name" value="RuvA domain 2-like"/>
    <property type="match status" value="1"/>
</dbReference>